<accession>O58413</accession>
<dbReference type="EC" id="1.2.7.7"/>
<dbReference type="EMBL" id="BA000001">
    <property type="protein sequence ID" value="BAA29771.1"/>
    <property type="status" value="ALT_INIT"/>
    <property type="molecule type" value="Genomic_DNA"/>
</dbReference>
<dbReference type="PIR" id="A71114">
    <property type="entry name" value="A71114"/>
</dbReference>
<dbReference type="RefSeq" id="WP_048053189.1">
    <property type="nucleotide sequence ID" value="NC_000961.1"/>
</dbReference>
<dbReference type="SMR" id="O58413"/>
<dbReference type="IntAct" id="O58413">
    <property type="interactions" value="1"/>
</dbReference>
<dbReference type="MINT" id="O58413"/>
<dbReference type="STRING" id="70601.gene:9377625"/>
<dbReference type="EnsemblBacteria" id="BAA29771">
    <property type="protein sequence ID" value="BAA29771"/>
    <property type="gene ID" value="BAA29771"/>
</dbReference>
<dbReference type="GeneID" id="1443008"/>
<dbReference type="KEGG" id="pho:PH0680"/>
<dbReference type="eggNOG" id="arCOG01608">
    <property type="taxonomic scope" value="Archaea"/>
</dbReference>
<dbReference type="OrthoDB" id="372068at2157"/>
<dbReference type="Proteomes" id="UP000000752">
    <property type="component" value="Chromosome"/>
</dbReference>
<dbReference type="GO" id="GO:0043807">
    <property type="term" value="F:3-methyl-2-oxobutanoate dehydrogenase (ferredoxin) activity"/>
    <property type="evidence" value="ECO:0007669"/>
    <property type="project" value="UniProtKB-EC"/>
</dbReference>
<dbReference type="GO" id="GO:0006082">
    <property type="term" value="P:organic acid metabolic process"/>
    <property type="evidence" value="ECO:0007669"/>
    <property type="project" value="UniProtKB-ARBA"/>
</dbReference>
<dbReference type="GO" id="GO:0006979">
    <property type="term" value="P:response to oxidative stress"/>
    <property type="evidence" value="ECO:0007669"/>
    <property type="project" value="TreeGrafter"/>
</dbReference>
<dbReference type="GO" id="GO:0044272">
    <property type="term" value="P:sulfur compound biosynthetic process"/>
    <property type="evidence" value="ECO:0007669"/>
    <property type="project" value="UniProtKB-ARBA"/>
</dbReference>
<dbReference type="CDD" id="cd07034">
    <property type="entry name" value="TPP_PYR_PFOR_IOR-alpha_like"/>
    <property type="match status" value="1"/>
</dbReference>
<dbReference type="FunFam" id="3.40.50.920:FF:000010">
    <property type="entry name" value="Pyruvate ferredoxin oxidoreductase, alpha subunit"/>
    <property type="match status" value="1"/>
</dbReference>
<dbReference type="FunFam" id="3.40.50.970:FF:000012">
    <property type="entry name" value="Pyruvate:ferredoxin (Flavodoxin) oxidoreductase"/>
    <property type="match status" value="1"/>
</dbReference>
<dbReference type="Gene3D" id="3.40.50.920">
    <property type="match status" value="1"/>
</dbReference>
<dbReference type="Gene3D" id="3.40.50.970">
    <property type="match status" value="1"/>
</dbReference>
<dbReference type="InterPro" id="IPR033412">
    <property type="entry name" value="PFOR_II"/>
</dbReference>
<dbReference type="InterPro" id="IPR050722">
    <property type="entry name" value="Pyruvate:ferred/Flavod_OxRd"/>
</dbReference>
<dbReference type="InterPro" id="IPR002880">
    <property type="entry name" value="Pyrv_Fd/Flavodoxin_OxRdtase_N"/>
</dbReference>
<dbReference type="InterPro" id="IPR029061">
    <property type="entry name" value="THDP-binding"/>
</dbReference>
<dbReference type="InterPro" id="IPR009014">
    <property type="entry name" value="Transketo_C/PFOR_II"/>
</dbReference>
<dbReference type="NCBIfam" id="NF006232">
    <property type="entry name" value="PRK08366.1"/>
    <property type="match status" value="1"/>
</dbReference>
<dbReference type="PANTHER" id="PTHR32154">
    <property type="entry name" value="PYRUVATE-FLAVODOXIN OXIDOREDUCTASE-RELATED"/>
    <property type="match status" value="1"/>
</dbReference>
<dbReference type="PANTHER" id="PTHR32154:SF0">
    <property type="entry name" value="PYRUVATE-FLAVODOXIN OXIDOREDUCTASE-RELATED"/>
    <property type="match status" value="1"/>
</dbReference>
<dbReference type="Pfam" id="PF17147">
    <property type="entry name" value="PFOR_II"/>
    <property type="match status" value="1"/>
</dbReference>
<dbReference type="Pfam" id="PF01855">
    <property type="entry name" value="POR_N"/>
    <property type="match status" value="1"/>
</dbReference>
<dbReference type="SUPFAM" id="SSF52518">
    <property type="entry name" value="Thiamin diphosphate-binding fold (THDP-binding)"/>
    <property type="match status" value="1"/>
</dbReference>
<dbReference type="SUPFAM" id="SSF52922">
    <property type="entry name" value="TK C-terminal domain-like"/>
    <property type="match status" value="1"/>
</dbReference>
<sequence>MEYNPIKKVVSGNYAAAYAALHARVQVVAAYPITPQTSIIEKIAEFIANGEADIQYIPVESEHSAMAACIGASATGARVFTATSAQGLALMHEMLHWAAGSRLPIVMVNVNRAMAPPWSVWDDQTDSLSQRDTGWMQFYAENNQEVYDGVLMAYKVAETVNIPTMIIESAFILSHTYEVVNMIPQELVDEFLPPRKPLYTLTDFENPIAVGALATPADYYEFRYKIAKAHEEAKKVIKSVGKEFGERFGRDYSKMIETGYIEDADFVFMGMGSLMGTVKEAVDLLRKEGYKVGYAKVRWFRPFPKEELLEIAESVKGIAVLDRNFSFGQEGILFTEAKGALYNTGVRPIMKDYIVGLGGRDFTVRDVKAIAEDMKKVVESGKLDKEIEWYHLKR</sequence>
<feature type="chain" id="PRO_0000099953" description="Ketoisovalerate oxidoreductase subunit VorA">
    <location>
        <begin position="1"/>
        <end position="394"/>
    </location>
</feature>
<protein>
    <recommendedName>
        <fullName>Ketoisovalerate oxidoreductase subunit VorA</fullName>
        <shortName>VOR</shortName>
        <ecNumber>1.2.7.7</ecNumber>
    </recommendedName>
    <alternativeName>
        <fullName>2-oxoisovalerate ferredoxin reductase subunit alpha</fullName>
    </alternativeName>
    <alternativeName>
        <fullName>2-oxoisovalerate oxidoreductase alpha chain</fullName>
    </alternativeName>
</protein>
<organism>
    <name type="scientific">Pyrococcus horikoshii (strain ATCC 700860 / DSM 12428 / JCM 9974 / NBRC 100139 / OT-3)</name>
    <dbReference type="NCBI Taxonomy" id="70601"/>
    <lineage>
        <taxon>Archaea</taxon>
        <taxon>Methanobacteriati</taxon>
        <taxon>Methanobacteriota</taxon>
        <taxon>Thermococci</taxon>
        <taxon>Thermococcales</taxon>
        <taxon>Thermococcaceae</taxon>
        <taxon>Pyrococcus</taxon>
    </lineage>
</organism>
<comment type="catalytic activity">
    <reaction>
        <text>3-methyl-2-oxobutanoate + 2 oxidized [2Fe-2S]-[ferredoxin] + CoA = 2-methylpropanoyl-CoA + 2 reduced [2Fe-2S]-[ferredoxin] + CO2 + H(+)</text>
        <dbReference type="Rhea" id="RHEA:11712"/>
        <dbReference type="Rhea" id="RHEA-COMP:10000"/>
        <dbReference type="Rhea" id="RHEA-COMP:10001"/>
        <dbReference type="ChEBI" id="CHEBI:11851"/>
        <dbReference type="ChEBI" id="CHEBI:15378"/>
        <dbReference type="ChEBI" id="CHEBI:16526"/>
        <dbReference type="ChEBI" id="CHEBI:33737"/>
        <dbReference type="ChEBI" id="CHEBI:33738"/>
        <dbReference type="ChEBI" id="CHEBI:57287"/>
        <dbReference type="ChEBI" id="CHEBI:57338"/>
        <dbReference type="EC" id="1.2.7.7"/>
    </reaction>
</comment>
<comment type="subunit">
    <text evidence="1">Heterotetramer of one alpha, one beta, one delta and one gamma chain.</text>
</comment>
<comment type="sequence caution" evidence="2">
    <conflict type="erroneous initiation">
        <sequence resource="EMBL-CDS" id="BAA29771"/>
    </conflict>
</comment>
<evidence type="ECO:0000250" key="1"/>
<evidence type="ECO:0000305" key="2"/>
<reference key="1">
    <citation type="journal article" date="1998" name="DNA Res.">
        <title>Complete sequence and gene organization of the genome of a hyper-thermophilic archaebacterium, Pyrococcus horikoshii OT3.</title>
        <authorList>
            <person name="Kawarabayasi Y."/>
            <person name="Sawada M."/>
            <person name="Horikawa H."/>
            <person name="Haikawa Y."/>
            <person name="Hino Y."/>
            <person name="Yamamoto S."/>
            <person name="Sekine M."/>
            <person name="Baba S."/>
            <person name="Kosugi H."/>
            <person name="Hosoyama A."/>
            <person name="Nagai Y."/>
            <person name="Sakai M."/>
            <person name="Ogura K."/>
            <person name="Otsuka R."/>
            <person name="Nakazawa H."/>
            <person name="Takamiya M."/>
            <person name="Ohfuku Y."/>
            <person name="Funahashi T."/>
            <person name="Tanaka T."/>
            <person name="Kudoh Y."/>
            <person name="Yamazaki J."/>
            <person name="Kushida N."/>
            <person name="Oguchi A."/>
            <person name="Aoki K."/>
            <person name="Yoshizawa T."/>
            <person name="Nakamura Y."/>
            <person name="Robb F.T."/>
            <person name="Horikoshi K."/>
            <person name="Masuchi Y."/>
            <person name="Shizuya H."/>
            <person name="Kikuchi H."/>
        </authorList>
    </citation>
    <scope>NUCLEOTIDE SEQUENCE [LARGE SCALE GENOMIC DNA]</scope>
    <source>
        <strain>ATCC 700860 / DSM 12428 / JCM 9974 / NBRC 100139 / OT-3</strain>
    </source>
</reference>
<name>VORA_PYRHO</name>
<proteinExistence type="inferred from homology"/>
<keyword id="KW-0560">Oxidoreductase</keyword>
<gene>
    <name type="primary">vorA</name>
    <name type="ordered locus">PH0680</name>
</gene>